<protein>
    <recommendedName>
        <fullName>Cycloviolacin-O21</fullName>
    </recommendedName>
</protein>
<feature type="peptide" id="PRO_0000294950" description="Cycloviolacin-O21" evidence="2 3">
    <location>
        <begin position="1"/>
        <end position="29"/>
    </location>
</feature>
<feature type="disulfide bond" evidence="1 2">
    <location>
        <begin position="5"/>
        <end position="19"/>
    </location>
</feature>
<feature type="disulfide bond" evidence="1 2">
    <location>
        <begin position="9"/>
        <end position="21"/>
    </location>
</feature>
<feature type="disulfide bond" evidence="1 2">
    <location>
        <begin position="14"/>
        <end position="26"/>
    </location>
</feature>
<feature type="cross-link" description="Cyclopeptide (Gly-Asn)" evidence="3">
    <location>
        <begin position="1"/>
        <end position="29"/>
    </location>
</feature>
<reference evidence="5" key="1">
    <citation type="journal article" date="2006" name="Biochem. J.">
        <title>A novel suite of cyclotides from Viola odorata: sequence variation and the implications for structure, function and stability.</title>
        <authorList>
            <person name="Ireland D.C."/>
            <person name="Colgrave M.L."/>
            <person name="Craik D.J."/>
        </authorList>
    </citation>
    <scope>PROTEIN SEQUENCE</scope>
    <scope>MASS SPECTROMETRY</scope>
</reference>
<reference key="2">
    <citation type="journal article" date="2017" name="J. Nat. Prod.">
        <title>Cyclotides from the Indian Medicinal Plant Viola odorata (Banafsha): Identification and Characterization.</title>
        <authorList>
            <person name="Narayani M."/>
            <person name="Chadha A."/>
            <person name="Srivastava S."/>
        </authorList>
    </citation>
    <scope>TISSUE SPECIFICITY</scope>
    <scope>IDENTIFICATION BY MASS SPECTROMETRY</scope>
</reference>
<evidence type="ECO:0000250" key="1">
    <source>
        <dbReference type="UniProtKB" id="P83835"/>
    </source>
</evidence>
<evidence type="ECO:0000255" key="2">
    <source>
        <dbReference type="PROSITE-ProRule" id="PRU00395"/>
    </source>
</evidence>
<evidence type="ECO:0000269" key="3">
    <source>
    </source>
</evidence>
<evidence type="ECO:0000269" key="4">
    <source>
    </source>
</evidence>
<evidence type="ECO:0000305" key="5"/>
<dbReference type="SMR" id="P85184"/>
<dbReference type="GO" id="GO:0006952">
    <property type="term" value="P:defense response"/>
    <property type="evidence" value="ECO:0007669"/>
    <property type="project" value="UniProtKB-KW"/>
</dbReference>
<dbReference type="InterPro" id="IPR005535">
    <property type="entry name" value="Cyclotide"/>
</dbReference>
<dbReference type="InterPro" id="IPR012324">
    <property type="entry name" value="Cyclotide_moebius_CS"/>
</dbReference>
<dbReference type="InterPro" id="IPR036146">
    <property type="entry name" value="Cyclotide_sf"/>
</dbReference>
<dbReference type="Pfam" id="PF03784">
    <property type="entry name" value="Cyclotide"/>
    <property type="match status" value="1"/>
</dbReference>
<dbReference type="PIRSF" id="PIRSF037891">
    <property type="entry name" value="Cycloviolacin"/>
    <property type="match status" value="1"/>
</dbReference>
<dbReference type="SUPFAM" id="SSF57038">
    <property type="entry name" value="Cyclotides"/>
    <property type="match status" value="1"/>
</dbReference>
<dbReference type="PROSITE" id="PS51052">
    <property type="entry name" value="CYCLOTIDE"/>
    <property type="match status" value="1"/>
</dbReference>
<dbReference type="PROSITE" id="PS60009">
    <property type="entry name" value="CYCLOTIDE_MOEBIUS"/>
    <property type="match status" value="1"/>
</dbReference>
<keyword id="KW-0903">Direct protein sequencing</keyword>
<keyword id="KW-1015">Disulfide bond</keyword>
<keyword id="KW-0960">Knottin</keyword>
<keyword id="KW-0611">Plant defense</keyword>
<sequence>GLPVCGETCVTGSCYTPGCTCSWPVCTRN</sequence>
<name>CYO21_VIOOD</name>
<proteinExistence type="evidence at protein level"/>
<accession>P85184</accession>
<organism>
    <name type="scientific">Viola odorata</name>
    <name type="common">Sweet violet</name>
    <dbReference type="NCBI Taxonomy" id="97441"/>
    <lineage>
        <taxon>Eukaryota</taxon>
        <taxon>Viridiplantae</taxon>
        <taxon>Streptophyta</taxon>
        <taxon>Embryophyta</taxon>
        <taxon>Tracheophyta</taxon>
        <taxon>Spermatophyta</taxon>
        <taxon>Magnoliopsida</taxon>
        <taxon>eudicotyledons</taxon>
        <taxon>Gunneridae</taxon>
        <taxon>Pentapetalae</taxon>
        <taxon>rosids</taxon>
        <taxon>fabids</taxon>
        <taxon>Malpighiales</taxon>
        <taxon>Violaceae</taxon>
        <taxon>Viola</taxon>
        <taxon>Viola subgen. Viola</taxon>
        <taxon>Viola sect. Viola</taxon>
        <taxon>Viola subsect. Viola</taxon>
    </lineage>
</organism>
<comment type="function">
    <text evidence="5">Probably participates in a plant defense mechanism.</text>
</comment>
<comment type="tissue specificity">
    <text evidence="4">Expressed in leaves, petals, petioles, and runners but not in roots (at protein level).</text>
</comment>
<comment type="domain">
    <text evidence="1">The presence of a 'disulfide through disulfide knot' structurally defines this protein as a knottin.</text>
</comment>
<comment type="PTM">
    <text evidence="2 3">This is a cyclic peptide.</text>
</comment>
<comment type="mass spectrometry"/>
<comment type="similarity">
    <text evidence="2">Belongs to the cyclotide family. Moebius subfamily.</text>
</comment>
<comment type="caution">
    <text evidence="3">This peptide is cyclic. The start position was chosen by similarity to OAK1 (kalata-B1) for which the DNA sequence is known.</text>
</comment>